<keyword id="KW-1003">Cell membrane</keyword>
<keyword id="KW-0903">Direct protein sequencing</keyword>
<keyword id="KW-1015">Disulfide bond</keyword>
<keyword id="KW-0297">G-protein coupled receptor</keyword>
<keyword id="KW-0325">Glycoprotein</keyword>
<keyword id="KW-0393">Immunoglobulin domain</keyword>
<keyword id="KW-0472">Membrane</keyword>
<keyword id="KW-0597">Phosphoprotein</keyword>
<keyword id="KW-0675">Receptor</keyword>
<keyword id="KW-1185">Reference proteome</keyword>
<keyword id="KW-0677">Repeat</keyword>
<keyword id="KW-0732">Signal</keyword>
<keyword id="KW-0807">Transducer</keyword>
<keyword id="KW-0812">Transmembrane</keyword>
<keyword id="KW-1133">Transmembrane helix</keyword>
<evidence type="ECO:0000250" key="1">
    <source>
        <dbReference type="UniProtKB" id="G5E8Q8"/>
    </source>
</evidence>
<evidence type="ECO:0000255" key="2"/>
<evidence type="ECO:0000255" key="3">
    <source>
        <dbReference type="PROSITE-ProRule" id="PRU00098"/>
    </source>
</evidence>
<evidence type="ECO:0000255" key="4">
    <source>
        <dbReference type="PROSITE-ProRule" id="PRU00114"/>
    </source>
</evidence>
<evidence type="ECO:0000255" key="5">
    <source>
        <dbReference type="PROSITE-ProRule" id="PRU00188"/>
    </source>
</evidence>
<evidence type="ECO:0000256" key="6">
    <source>
        <dbReference type="SAM" id="MobiDB-lite"/>
    </source>
</evidence>
<evidence type="ECO:0000269" key="7">
    <source>
    </source>
</evidence>
<evidence type="ECO:0000269" key="8">
    <source>
    </source>
</evidence>
<evidence type="ECO:0000269" key="9">
    <source>
    </source>
</evidence>
<evidence type="ECO:0000303" key="10">
    <source>
    </source>
</evidence>
<evidence type="ECO:0000303" key="11">
    <source>
    </source>
</evidence>
<evidence type="ECO:0000305" key="12"/>
<evidence type="ECO:0000305" key="13">
    <source>
    </source>
</evidence>
<evidence type="ECO:0007744" key="14">
    <source>
    </source>
</evidence>
<sequence length="1349" mass="149446">MKSSRTVTLYFVLIVICSSEATWSRPAEPIVHPLILQEHELAGEELLRPKRAVAVGGPVAEEYTVDVEISFENVSFLESIRAHLNSLRFPVQGNGTDILSMAMTTVCTPTGNDLLCFCEKGYQWPEERCLSSLTCQEHDSALPGRYCNCLKGLPPQGPFCQLPETYITLKIKVRLNIGFQEDLENTSSALYRSYKTDLERAFRAGYRTLPGFRSVTVTQFTKGSVVVDYIVEVASAPLPGSIHKANEQVIQNLNQTYKMDYNSFQGTPSNETKFTVTPEFIFEGDNVTLECESEFVSSNTSWFYGEKRSDIQNSDKFSIHTSIINNISLVTRLTIFNFTQHDAGLYGCNVTLDIFEYGTVRKLDVTPIRILAKEERKVVCDNNPISLNCCSENIANWSRIEWKQEGKINIEGTPETDLESSCSTYTLKADGTQCPSGSSGTTVIYTCEFVSVYGAKGSKNIAVTFTSVANLTITPDPISVSEGQSFSITCLSDVSSFDEVYWNTSAGIKIHPRFYTMRRYRDGAESVLTVKTSTREWNGTYHCIFRYKNSYSIATKDVTVHPLPLESDIMMDPLEASGLCTSSHQFKCCIEENDGEEYIVTFHVDSSSFPAEREVIGKQACYTYSLPGKLPSRCPKDIDVFCHFTNAANSSVRSPSMKLTLVPGKNITCQDPIIGIGEPGKVIQKLCQFAGVSRSPGQTIGGTVTYKCVGSQWKEETRACISAPINGLLQLAKALIKSPSQDQKLPKYLRDLSVSTGKEEQDIRSSPGSLGAIISILDLLSTVPTQVNSEMMRDILATINVILDKSTLNSWEKLLQQQSNQSSQFLQSVERFSKALELGDSTPPFLFHPNVQMKSMVIKRGHAQMYQQKFVFTDSDLWGDVAIDECQLGSLQPDSSIVTVAFPTLKAILAQDGQRKTPSNSLVMTTTVSHNIVKPFRISMTFKNNHRSGGKPQCVFWNFSLANNTGGWDSSGCTVEDDGRDNRDRVFCKCNHLTSFSILMSPDSPDPGSLLKILLDIISYIGLGFSIVSLAACLVVEAMVWKSVTKNRTSYMRHICIVNIALCLLIADIWFIVAGAIHDGHYPLNETACVAATFFIHFFYLSVFFWMLTLGLMLFYRLIFILHDASKSTQKAIAFSLGYGCPLIISSITVGVTQPQEVYMRKNACWLNWEDTRALLAFAIPALIIVVVNVSITVVVITKILRPSVGDKPGKQEKSSLFQISKSIGVLTPLLGLTWGFGLATVIQGSNAVFHIIFTLLNAFQGLFILLFGCLWDQKVQEALLHKFSLSRWSSQHSKSTSLGSSTPVFSMSSPISRRFNNLFGKTGTYNVSTPETTSSSVENSSSAYSLLN</sequence>
<reference key="1">
    <citation type="journal article" date="1999" name="J. Biol. Chem.">
        <title>Ig-hepta, a novel member of the G protein-coupled hepta-helical receptor (GPCR) family that has immunoglobulin-like repeats in a long N-terminal extracellular domain and defines a new subfamily of GPCRs.</title>
        <authorList>
            <person name="Abe J."/>
            <person name="Suzuki H."/>
            <person name="Notoya M."/>
            <person name="Yamamoto T."/>
            <person name="Hirose S."/>
        </authorList>
    </citation>
    <scope>NUCLEOTIDE SEQUENCE [MRNA]</scope>
    <scope>TISSUE SPECIFICITY</scope>
    <scope>SUBUNIT</scope>
    <scope>SUBCELLULAR LOCATION</scope>
    <scope>GLYCOSYLATION</scope>
    <scope>DEVELOPMENTAL STAGE</scope>
    <source>
        <tissue>Lung</tissue>
    </source>
</reference>
<reference key="2">
    <citation type="journal article" date="2002" name="J. Biol. Chem.">
        <title>Cleavage of Ig-Hepta at a 'SEA' module and at a conserved G protein-coupled receptor proteolytic site.</title>
        <authorList>
            <person name="Abe J."/>
            <person name="Fukuzawa T."/>
            <person name="Hirose S."/>
        </authorList>
    </citation>
    <scope>PROTEIN SEQUENCE OF 224-233 AND 994-1003</scope>
    <scope>MUTAGENESIS OF THR-994</scope>
    <scope>PROTEOLYTIC PROCESSING</scope>
    <scope>GLYCOSYLATION</scope>
</reference>
<reference key="3">
    <citation type="journal article" date="2006" name="J. Biochem.">
        <title>Multiple processing of Ig-Hepta/GPR116, a G protein-coupled receptor with immunoglobulin (Ig)-like repeats, and generation of EGF2-like fragment.</title>
        <authorList>
            <person name="Fukuzawa T."/>
            <person name="Hirose S."/>
        </authorList>
    </citation>
    <scope>PROTEIN SEQUENCE OF 52-60</scope>
    <scope>PROTEOLYTIC PROCESSING</scope>
    <scope>CLEAVAGE BY FURIN</scope>
    <scope>GLYCOSYLATION</scope>
    <scope>SUBUNIT</scope>
    <scope>SUBCELLULAR LOCATION</scope>
</reference>
<reference key="4">
    <citation type="journal article" date="2006" name="Proc. Natl. Acad. Sci. U.S.A.">
        <title>Quantitative phosphoproteomics of vasopressin-sensitive renal cells: regulation of aquaporin-2 phosphorylation at two sites.</title>
        <authorList>
            <person name="Hoffert J.D."/>
            <person name="Pisitkun T."/>
            <person name="Wang G."/>
            <person name="Shen R.-F."/>
            <person name="Knepper M.A."/>
        </authorList>
    </citation>
    <scope>PHOSPHORYLATION [LARGE SCALE ANALYSIS] AT SER-819</scope>
    <scope>IDENTIFICATION BY MASS SPECTROMETRY [LARGE SCALE ANALYSIS]</scope>
</reference>
<reference key="5">
    <citation type="journal article" date="2012" name="Nat. Commun.">
        <title>Quantitative maps of protein phosphorylation sites across 14 different rat organs and tissues.</title>
        <authorList>
            <person name="Lundby A."/>
            <person name="Secher A."/>
            <person name="Lage K."/>
            <person name="Nordsborg N.B."/>
            <person name="Dmytriyev A."/>
            <person name="Lundby C."/>
            <person name="Olsen J.V."/>
        </authorList>
    </citation>
    <scope>IDENTIFICATION BY MASS SPECTROMETRY [LARGE SCALE ANALYSIS]</scope>
</reference>
<reference key="6">
    <citation type="journal article" date="2022" name="Elife">
        <title>Regulation of pulmonary surfactant by the adhesion GPCR GPR116/ADGRF5 requires a tethered agonist-mediated activation mechanism.</title>
        <authorList>
            <person name="Bridges J.P."/>
            <person name="Safina C."/>
            <person name="Pirard B."/>
            <person name="Brown K."/>
            <person name="Filuta A."/>
            <person name="Panchanathan R."/>
            <person name="Bouhelal R."/>
            <person name="Reymann N."/>
            <person name="Patel S."/>
            <person name="Seuwen K."/>
            <person name="Miller W.E."/>
            <person name="Ludwig M.G."/>
        </authorList>
    </citation>
    <scope>IDENTIFICATION OF THE TETHERED AGONIST</scope>
</reference>
<proteinExistence type="evidence at protein level"/>
<name>AGRF5_RAT</name>
<comment type="function">
    <text evidence="1">Receptor that plays a critical role in lung surfactant homeostasis. May play a role in controlling adipocyte function.</text>
</comment>
<comment type="function">
    <text evidence="1">Adhesion G protein-coupled receptor. In alveolar type II (ATII or AT2) cells, required for normal lung surfactant homeostasis. Modulation of both surfactant secretion and uptake by ATII cells is mediated by the downstream activation of GNAQ/GNA11 proteins and may be a consequence of increased cortical F-actin assembly induced by ADGRF5 activation. In the kidney, may play a role in the regulation of acid excretion into the primary urine, possibly by regulating the surface expression of V-ATPase proton pump. As a receptor for soluble FNDC4 (sFNDC4), required for proper systemic glucose tolerance, specifically sensitizing white adipose tissue to insulin. Also plays a role in sFNDC4-induced decrease of local inflammation in white adipose tissue.</text>
</comment>
<comment type="activity regulation">
    <text evidence="12">As an adhesion G protein-coupled receptor (aGPCR) exhibits a large N-terminal extracellular domain containing highly conserved GPCR autoproteolysis-inducing (GAIN) domain. During synthesis, intracellular autoproteolytic processing of nascent chain within the GAIN domain generates a mature protein, consisting of an N-terminal fragment that is non-covalently linked to the C-terminal fragment. The mature protein is routed to the plasma membrane where the N- and C-terminal fragments remain associated, forming the holoreceptor. Dissociation of the aGPCR fragments stimulates G protein signaling through the action of the tethered-peptide agonist stalk that is occluded within the GAIN domain in the holoreceptor form. This dissociation might be induced by ligand binding, such as that of sFNDC4.</text>
</comment>
<comment type="subunit">
    <text evidence="1 7 8 9">Homodimer; disulfide-linked (PubMed:10391944). Heterodimer of 2 chains generated by proteolytic processing; the large extracellular N-terminal fragment and the membrane-bound C-terminal fragment predominantly remain associated and non-covalently linked (PubMed:11973329). Fragment generates by the processing enzyme furin remains attached to the extracellular N-terminal fragment (PubMed:16882675). Interacts (via N-terminal extracellular domain) with SFTPD (By similarity).</text>
</comment>
<comment type="subcellular location">
    <subcellularLocation>
        <location evidence="7 9">Cell membrane</location>
        <topology evidence="2">Multi-pass membrane protein</topology>
    </subcellularLocation>
</comment>
<comment type="tissue specificity">
    <text evidence="7">Highly expressed in the lung and to a much lesser extent in the kidney and heart. Dense localization in alveolar walls of the lung and in the intercalated cells of the collecting duct of the kidney.</text>
</comment>
<comment type="developmental stage">
    <text evidence="7">In the lung, expression increases from postnatal day 3 to 14 weeks of age.</text>
</comment>
<comment type="PTM">
    <text evidence="7 8 9">Highly glycosylated.</text>
</comment>
<comment type="PTM">
    <text evidence="8 9">Proteolytically cleaved at multiple sites: one in the GPS region of the GAIN-B domain (S1 site) and the other in the SEA domain (S2 site). The proteolytic cleavage at S1 site generates an extracellular subunit and a seven-transmembrane subunit. The proteolytic cleavage at S2 site generates a fragment that undergoes proteolytic cleavage by the processing enzyme furin.</text>
</comment>
<comment type="similarity">
    <text evidence="12">Belongs to the G-protein coupled receptor 2 family. Adhesion G-protein coupled receptor (ADGR) subfamily.</text>
</comment>
<feature type="signal peptide" evidence="2">
    <location>
        <begin position="1"/>
        <end position="24"/>
    </location>
</feature>
<feature type="chain" id="PRO_0000012897" description="Adhesion G protein-coupled receptor F5">
    <location>
        <begin position="25"/>
        <end position="1349"/>
    </location>
</feature>
<feature type="topological domain" description="Extracellular" evidence="12">
    <location>
        <begin position="25"/>
        <end position="1016"/>
    </location>
</feature>
<feature type="transmembrane region" description="Helical; Name=1" evidence="2">
    <location>
        <begin position="1017"/>
        <end position="1036"/>
    </location>
</feature>
<feature type="topological domain" description="Cytoplasmic" evidence="12">
    <location>
        <begin position="1037"/>
        <end position="1055"/>
    </location>
</feature>
<feature type="transmembrane region" description="Helical; Name=2" evidence="2">
    <location>
        <begin position="1056"/>
        <end position="1078"/>
    </location>
</feature>
<feature type="topological domain" description="Extracellular" evidence="12">
    <location>
        <begin position="1079"/>
        <end position="1097"/>
    </location>
</feature>
<feature type="transmembrane region" description="Helical; Name=3" evidence="2">
    <location>
        <begin position="1098"/>
        <end position="1120"/>
    </location>
</feature>
<feature type="topological domain" description="Cytoplasmic" evidence="12">
    <location>
        <begin position="1121"/>
        <end position="1131"/>
    </location>
</feature>
<feature type="transmembrane region" description="Helical; Name=4" evidence="2">
    <location>
        <begin position="1132"/>
        <end position="1154"/>
    </location>
</feature>
<feature type="topological domain" description="Extracellular" evidence="12">
    <location>
        <begin position="1155"/>
        <end position="1173"/>
    </location>
</feature>
<feature type="transmembrane region" description="Helical; Name=5" evidence="2">
    <location>
        <begin position="1174"/>
        <end position="1196"/>
    </location>
</feature>
<feature type="topological domain" description="Cytoplasmic" evidence="12">
    <location>
        <begin position="1197"/>
        <end position="1216"/>
    </location>
</feature>
<feature type="transmembrane region" description="Helical; Name=6" evidence="2">
    <location>
        <begin position="1217"/>
        <end position="1239"/>
    </location>
</feature>
<feature type="topological domain" description="Extracellular" evidence="12">
    <location>
        <begin position="1240"/>
        <end position="1248"/>
    </location>
</feature>
<feature type="transmembrane region" description="Helical; Name=7" evidence="2">
    <location>
        <begin position="1249"/>
        <end position="1271"/>
    </location>
</feature>
<feature type="topological domain" description="Cytoplasmic" evidence="12">
    <location>
        <begin position="1272"/>
        <end position="1349"/>
    </location>
</feature>
<feature type="domain" description="SEA" evidence="5">
    <location>
        <begin position="163"/>
        <end position="271"/>
    </location>
</feature>
<feature type="domain" description="Ig-like 1">
    <location>
        <begin position="268"/>
        <end position="366"/>
    </location>
</feature>
<feature type="domain" description="Ig-like 2">
    <location>
        <begin position="367"/>
        <end position="464"/>
    </location>
</feature>
<feature type="domain" description="Ig-like 3">
    <location>
        <begin position="469"/>
        <end position="559"/>
    </location>
</feature>
<feature type="domain" description="GAIN-B" evidence="3">
    <location>
        <begin position="842"/>
        <end position="1006"/>
    </location>
</feature>
<feature type="region of interest" description="GPS" evidence="3">
    <location>
        <begin position="954"/>
        <end position="1006"/>
    </location>
</feature>
<feature type="region of interest" description="Tethered agonist" evidence="13">
    <location>
        <begin position="994"/>
        <end position="1009"/>
    </location>
</feature>
<feature type="region of interest" description="Disordered" evidence="6">
    <location>
        <begin position="1329"/>
        <end position="1349"/>
    </location>
</feature>
<feature type="compositionally biased region" description="Low complexity" evidence="6">
    <location>
        <begin position="1329"/>
        <end position="1343"/>
    </location>
</feature>
<feature type="site" description="Cleavage; by furin" evidence="9">
    <location>
        <begin position="51"/>
        <end position="52"/>
    </location>
</feature>
<feature type="site" description="Cleavage" evidence="8">
    <location>
        <begin position="223"/>
        <end position="224"/>
    </location>
</feature>
<feature type="site" description="Cleavage; by autolysis" evidence="3 8">
    <location>
        <begin position="993"/>
        <end position="994"/>
    </location>
</feature>
<feature type="modified residue" description="Phosphoserine" evidence="14">
    <location>
        <position position="819"/>
    </location>
</feature>
<feature type="modified residue" description="Phosphothreonine" evidence="1">
    <location>
        <position position="1303"/>
    </location>
</feature>
<feature type="modified residue" description="Phosphoserine" evidence="1">
    <location>
        <position position="1310"/>
    </location>
</feature>
<feature type="glycosylation site" description="N-linked (GlcNAc...) asparagine" evidence="2">
    <location>
        <position position="73"/>
    </location>
</feature>
<feature type="glycosylation site" description="N-linked (GlcNAc...) asparagine" evidence="2">
    <location>
        <position position="94"/>
    </location>
</feature>
<feature type="glycosylation site" description="N-linked (GlcNAc...) asparagine" evidence="2">
    <location>
        <position position="185"/>
    </location>
</feature>
<feature type="glycosylation site" description="N-linked (GlcNAc...) asparagine" evidence="2">
    <location>
        <position position="254"/>
    </location>
</feature>
<feature type="glycosylation site" description="N-linked (GlcNAc...) asparagine" evidence="2">
    <location>
        <position position="270"/>
    </location>
</feature>
<feature type="glycosylation site" description="N-linked (GlcNAc...) asparagine" evidence="2">
    <location>
        <position position="286"/>
    </location>
</feature>
<feature type="glycosylation site" description="N-linked (GlcNAc...) asparagine" evidence="2">
    <location>
        <position position="299"/>
    </location>
</feature>
<feature type="glycosylation site" description="N-linked (GlcNAc...) asparagine" evidence="2">
    <location>
        <position position="326"/>
    </location>
</feature>
<feature type="glycosylation site" description="N-linked (GlcNAc...) asparagine" evidence="2">
    <location>
        <position position="337"/>
    </location>
</feature>
<feature type="glycosylation site" description="N-linked (GlcNAc...) asparagine" evidence="2">
    <location>
        <position position="349"/>
    </location>
</feature>
<feature type="glycosylation site" description="N-linked (GlcNAc...) asparagine" evidence="2">
    <location>
        <position position="396"/>
    </location>
</feature>
<feature type="glycosylation site" description="N-linked (GlcNAc...) asparagine" evidence="2">
    <location>
        <position position="470"/>
    </location>
</feature>
<feature type="glycosylation site" description="N-linked (GlcNAc...) asparagine" evidence="2">
    <location>
        <position position="503"/>
    </location>
</feature>
<feature type="glycosylation site" description="N-linked (GlcNAc...) asparagine" evidence="2">
    <location>
        <position position="538"/>
    </location>
</feature>
<feature type="glycosylation site" description="N-linked (GlcNAc...) asparagine" evidence="2">
    <location>
        <position position="649"/>
    </location>
</feature>
<feature type="glycosylation site" description="N-linked (GlcNAc...) asparagine" evidence="2">
    <location>
        <position position="666"/>
    </location>
</feature>
<feature type="glycosylation site" description="N-linked (GlcNAc...) asparagine" evidence="2">
    <location>
        <position position="820"/>
    </location>
</feature>
<feature type="glycosylation site" description="N-linked (GlcNAc...) asparagine" evidence="2">
    <location>
        <position position="958"/>
    </location>
</feature>
<feature type="glycosylation site" description="N-linked (GlcNAc...) asparagine" evidence="2">
    <location>
        <position position="963"/>
    </location>
</feature>
<feature type="glycosylation site" description="N-linked (GlcNAc...) asparagine" evidence="2">
    <location>
        <position position="1085"/>
    </location>
</feature>
<feature type="disulfide bond" evidence="4">
    <location>
        <begin position="291"/>
        <end position="348"/>
    </location>
</feature>
<feature type="disulfide bond" evidence="4">
    <location>
        <begin position="389"/>
        <end position="447"/>
    </location>
</feature>
<feature type="disulfide bond" evidence="4">
    <location>
        <begin position="490"/>
        <end position="543"/>
    </location>
</feature>
<feature type="disulfide bond" evidence="3">
    <location>
        <begin position="954"/>
        <end position="988"/>
    </location>
</feature>
<feature type="disulfide bond" evidence="3">
    <location>
        <begin position="973"/>
        <end position="990"/>
    </location>
</feature>
<feature type="mutagenesis site" description="Abolishes cleavage." evidence="8">
    <original>T</original>
    <variation>A</variation>
    <location>
        <position position="994"/>
    </location>
</feature>
<protein>
    <recommendedName>
        <fullName>Adhesion G protein-coupled receptor F5</fullName>
    </recommendedName>
    <alternativeName>
        <fullName>G-protein coupled hepta-helical receptor Ig-hepta</fullName>
        <shortName evidence="10 11">Ig-Hepta</shortName>
    </alternativeName>
    <alternativeName>
        <fullName>G-protein coupled receptor 116</fullName>
    </alternativeName>
</protein>
<dbReference type="EMBL" id="AB019120">
    <property type="protein sequence ID" value="BAA82518.1"/>
    <property type="molecule type" value="mRNA"/>
</dbReference>
<dbReference type="RefSeq" id="NP_620810.1">
    <property type="nucleotide sequence ID" value="NM_139110.2"/>
</dbReference>
<dbReference type="RefSeq" id="XP_006244659.1">
    <property type="nucleotide sequence ID" value="XM_006244597.3"/>
</dbReference>
<dbReference type="SMR" id="Q9WVT0"/>
<dbReference type="FunCoup" id="Q9WVT0">
    <property type="interactions" value="69"/>
</dbReference>
<dbReference type="STRING" id="10116.ENSRNOP00000071238"/>
<dbReference type="MEROPS" id="P02.032"/>
<dbReference type="GlyCosmos" id="Q9WVT0">
    <property type="glycosylation" value="20 sites, No reported glycans"/>
</dbReference>
<dbReference type="GlyGen" id="Q9WVT0">
    <property type="glycosylation" value="21 sites"/>
</dbReference>
<dbReference type="iPTMnet" id="Q9WVT0"/>
<dbReference type="PhosphoSitePlus" id="Q9WVT0"/>
<dbReference type="PaxDb" id="10116-ENSRNOP00000015223"/>
<dbReference type="Ensembl" id="ENSRNOT00000015223.3">
    <property type="protein sequence ID" value="ENSRNOP00000015223.1"/>
    <property type="gene ID" value="ENSRNOG00000011154.7"/>
</dbReference>
<dbReference type="GeneID" id="245977"/>
<dbReference type="KEGG" id="rno:245977"/>
<dbReference type="UCSC" id="RGD:621679">
    <property type="organism name" value="rat"/>
</dbReference>
<dbReference type="AGR" id="RGD:621679"/>
<dbReference type="CTD" id="221395"/>
<dbReference type="RGD" id="621679">
    <property type="gene designation" value="Adgrf5"/>
</dbReference>
<dbReference type="eggNOG" id="KOG4193">
    <property type="taxonomic scope" value="Eukaryota"/>
</dbReference>
<dbReference type="GeneTree" id="ENSGT00940000154603"/>
<dbReference type="HOGENOM" id="CLU_002753_3_5_1"/>
<dbReference type="InParanoid" id="Q9WVT0"/>
<dbReference type="PhylomeDB" id="Q9WVT0"/>
<dbReference type="TreeFam" id="TF316380"/>
<dbReference type="Reactome" id="R-RNO-5683826">
    <property type="pathway name" value="Surfactant metabolism"/>
</dbReference>
<dbReference type="PRO" id="PR:Q9WVT0"/>
<dbReference type="Proteomes" id="UP000002494">
    <property type="component" value="Chromosome 9"/>
</dbReference>
<dbReference type="Bgee" id="ENSRNOG00000011154">
    <property type="expression patterns" value="Expressed in lung and 19 other cell types or tissues"/>
</dbReference>
<dbReference type="ExpressionAtlas" id="Q9WVT0">
    <property type="expression patterns" value="baseline and differential"/>
</dbReference>
<dbReference type="GO" id="GO:0045177">
    <property type="term" value="C:apical part of cell"/>
    <property type="evidence" value="ECO:0000266"/>
    <property type="project" value="RGD"/>
</dbReference>
<dbReference type="GO" id="GO:0009986">
    <property type="term" value="C:cell surface"/>
    <property type="evidence" value="ECO:0000266"/>
    <property type="project" value="RGD"/>
</dbReference>
<dbReference type="GO" id="GO:0031410">
    <property type="term" value="C:cytoplasmic vesicle"/>
    <property type="evidence" value="ECO:0000266"/>
    <property type="project" value="RGD"/>
</dbReference>
<dbReference type="GO" id="GO:0005886">
    <property type="term" value="C:plasma membrane"/>
    <property type="evidence" value="ECO:0007669"/>
    <property type="project" value="UniProtKB-SubCell"/>
</dbReference>
<dbReference type="GO" id="GO:0004930">
    <property type="term" value="F:G protein-coupled receptor activity"/>
    <property type="evidence" value="ECO:0000318"/>
    <property type="project" value="GO_Central"/>
</dbReference>
<dbReference type="GO" id="GO:0007189">
    <property type="term" value="P:adenylate cyclase-activating G protein-coupled receptor signaling pathway"/>
    <property type="evidence" value="ECO:0000318"/>
    <property type="project" value="GO_Central"/>
</dbReference>
<dbReference type="GO" id="GO:0007166">
    <property type="term" value="P:cell surface receptor signaling pathway"/>
    <property type="evidence" value="ECO:0007669"/>
    <property type="project" value="InterPro"/>
</dbReference>
<dbReference type="GO" id="GO:0006112">
    <property type="term" value="P:energy reserve metabolic process"/>
    <property type="evidence" value="ECO:0000266"/>
    <property type="project" value="RGD"/>
</dbReference>
<dbReference type="GO" id="GO:0048821">
    <property type="term" value="P:erythrocyte development"/>
    <property type="evidence" value="ECO:0000266"/>
    <property type="project" value="RGD"/>
</dbReference>
<dbReference type="GO" id="GO:0045444">
    <property type="term" value="P:fat cell differentiation"/>
    <property type="evidence" value="ECO:0000266"/>
    <property type="project" value="RGD"/>
</dbReference>
<dbReference type="GO" id="GO:0003094">
    <property type="term" value="P:glomerular filtration"/>
    <property type="evidence" value="ECO:0000266"/>
    <property type="project" value="RGD"/>
</dbReference>
<dbReference type="GO" id="GO:0042593">
    <property type="term" value="P:glucose homeostasis"/>
    <property type="evidence" value="ECO:0000266"/>
    <property type="project" value="RGD"/>
</dbReference>
<dbReference type="GO" id="GO:0042116">
    <property type="term" value="P:macrophage activation"/>
    <property type="evidence" value="ECO:0000266"/>
    <property type="project" value="RGD"/>
</dbReference>
<dbReference type="GO" id="GO:0043031">
    <property type="term" value="P:negative regulation of macrophage activation"/>
    <property type="evidence" value="ECO:0000266"/>
    <property type="project" value="RGD"/>
</dbReference>
<dbReference type="GO" id="GO:0061626">
    <property type="term" value="P:pharyngeal arch artery morphogenesis"/>
    <property type="evidence" value="ECO:0000266"/>
    <property type="project" value="RGD"/>
</dbReference>
<dbReference type="GO" id="GO:0008654">
    <property type="term" value="P:phospholipid biosynthetic process"/>
    <property type="evidence" value="ECO:0000266"/>
    <property type="project" value="RGD"/>
</dbReference>
<dbReference type="GO" id="GO:0071073">
    <property type="term" value="P:positive regulation of phospholipid biosynthetic process"/>
    <property type="evidence" value="ECO:0000266"/>
    <property type="project" value="RGD"/>
</dbReference>
<dbReference type="GO" id="GO:0019216">
    <property type="term" value="P:regulation of lipid metabolic process"/>
    <property type="evidence" value="ECO:0000266"/>
    <property type="project" value="RGD"/>
</dbReference>
<dbReference type="GO" id="GO:0043129">
    <property type="term" value="P:surfactant homeostasis"/>
    <property type="evidence" value="ECO:0000266"/>
    <property type="project" value="RGD"/>
</dbReference>
<dbReference type="FunFam" id="1.20.1070.10:FF:000058">
    <property type="entry name" value="Adhesion G protein-coupled receptor F5"/>
    <property type="match status" value="1"/>
</dbReference>
<dbReference type="FunFam" id="2.60.40.10:FF:002239">
    <property type="entry name" value="Adhesion G protein-coupled receptor F5"/>
    <property type="match status" value="1"/>
</dbReference>
<dbReference type="Gene3D" id="2.60.220.50">
    <property type="match status" value="1"/>
</dbReference>
<dbReference type="Gene3D" id="2.60.40.10">
    <property type="entry name" value="Immunoglobulins"/>
    <property type="match status" value="2"/>
</dbReference>
<dbReference type="Gene3D" id="1.20.1070.10">
    <property type="entry name" value="Rhodopsin 7-helix transmembrane proteins"/>
    <property type="match status" value="1"/>
</dbReference>
<dbReference type="Gene3D" id="3.30.70.960">
    <property type="entry name" value="SEA domain"/>
    <property type="match status" value="1"/>
</dbReference>
<dbReference type="InterPro" id="IPR051587">
    <property type="entry name" value="Adhesion_GPCR"/>
</dbReference>
<dbReference type="InterPro" id="IPR057244">
    <property type="entry name" value="GAIN_B"/>
</dbReference>
<dbReference type="InterPro" id="IPR046338">
    <property type="entry name" value="GAIN_dom_sf"/>
</dbReference>
<dbReference type="InterPro" id="IPR017981">
    <property type="entry name" value="GPCR_2-like_7TM"/>
</dbReference>
<dbReference type="InterPro" id="IPR008078">
    <property type="entry name" value="GPCR_2_Ig-hepta-like_rcpt"/>
</dbReference>
<dbReference type="InterPro" id="IPR000832">
    <property type="entry name" value="GPCR_2_secretin-like"/>
</dbReference>
<dbReference type="InterPro" id="IPR017983">
    <property type="entry name" value="GPCR_2_secretin-like_CS"/>
</dbReference>
<dbReference type="InterPro" id="IPR000203">
    <property type="entry name" value="GPS"/>
</dbReference>
<dbReference type="InterPro" id="IPR007110">
    <property type="entry name" value="Ig-like_dom"/>
</dbReference>
<dbReference type="InterPro" id="IPR036179">
    <property type="entry name" value="Ig-like_dom_sf"/>
</dbReference>
<dbReference type="InterPro" id="IPR013783">
    <property type="entry name" value="Ig-like_fold"/>
</dbReference>
<dbReference type="InterPro" id="IPR003599">
    <property type="entry name" value="Ig_sub"/>
</dbReference>
<dbReference type="InterPro" id="IPR003598">
    <property type="entry name" value="Ig_sub2"/>
</dbReference>
<dbReference type="InterPro" id="IPR013151">
    <property type="entry name" value="Immunoglobulin_dom"/>
</dbReference>
<dbReference type="InterPro" id="IPR000082">
    <property type="entry name" value="SEA_dom"/>
</dbReference>
<dbReference type="InterPro" id="IPR036364">
    <property type="entry name" value="SEA_dom_sf"/>
</dbReference>
<dbReference type="PANTHER" id="PTHR45813:SF4">
    <property type="entry name" value="ADHESION G PROTEIN-COUPLED RECEPTOR F5"/>
    <property type="match status" value="1"/>
</dbReference>
<dbReference type="PANTHER" id="PTHR45813">
    <property type="entry name" value="IG-LIKE DOMAIN-CONTAINING PROTEIN"/>
    <property type="match status" value="1"/>
</dbReference>
<dbReference type="Pfam" id="PF00002">
    <property type="entry name" value="7tm_2"/>
    <property type="match status" value="1"/>
</dbReference>
<dbReference type="Pfam" id="PF25387">
    <property type="entry name" value="ADGRF3_N"/>
    <property type="match status" value="1"/>
</dbReference>
<dbReference type="Pfam" id="PF01825">
    <property type="entry name" value="GPS"/>
    <property type="match status" value="1"/>
</dbReference>
<dbReference type="Pfam" id="PF00047">
    <property type="entry name" value="ig"/>
    <property type="match status" value="1"/>
</dbReference>
<dbReference type="Pfam" id="PF01390">
    <property type="entry name" value="SEA"/>
    <property type="match status" value="1"/>
</dbReference>
<dbReference type="PRINTS" id="PR00249">
    <property type="entry name" value="GPCRSECRETIN"/>
</dbReference>
<dbReference type="PRINTS" id="PR01695">
    <property type="entry name" value="IGHEPTARCPTR"/>
</dbReference>
<dbReference type="SMART" id="SM00303">
    <property type="entry name" value="GPS"/>
    <property type="match status" value="1"/>
</dbReference>
<dbReference type="SMART" id="SM00409">
    <property type="entry name" value="IG"/>
    <property type="match status" value="2"/>
</dbReference>
<dbReference type="SMART" id="SM00408">
    <property type="entry name" value="IGc2"/>
    <property type="match status" value="2"/>
</dbReference>
<dbReference type="SUPFAM" id="SSF81321">
    <property type="entry name" value="Family A G protein-coupled receptor-like"/>
    <property type="match status" value="1"/>
</dbReference>
<dbReference type="SUPFAM" id="SSF48726">
    <property type="entry name" value="Immunoglobulin"/>
    <property type="match status" value="2"/>
</dbReference>
<dbReference type="SUPFAM" id="SSF82671">
    <property type="entry name" value="SEA domain"/>
    <property type="match status" value="1"/>
</dbReference>
<dbReference type="PROSITE" id="PS00650">
    <property type="entry name" value="G_PROTEIN_RECEP_F2_2"/>
    <property type="match status" value="1"/>
</dbReference>
<dbReference type="PROSITE" id="PS50261">
    <property type="entry name" value="G_PROTEIN_RECEP_F2_4"/>
    <property type="match status" value="1"/>
</dbReference>
<dbReference type="PROSITE" id="PS50221">
    <property type="entry name" value="GAIN_B"/>
    <property type="match status" value="1"/>
</dbReference>
<dbReference type="PROSITE" id="PS50835">
    <property type="entry name" value="IG_LIKE"/>
    <property type="match status" value="3"/>
</dbReference>
<dbReference type="PROSITE" id="PS50024">
    <property type="entry name" value="SEA"/>
    <property type="match status" value="1"/>
</dbReference>
<accession>Q9WVT0</accession>
<organism>
    <name type="scientific">Rattus norvegicus</name>
    <name type="common">Rat</name>
    <dbReference type="NCBI Taxonomy" id="10116"/>
    <lineage>
        <taxon>Eukaryota</taxon>
        <taxon>Metazoa</taxon>
        <taxon>Chordata</taxon>
        <taxon>Craniata</taxon>
        <taxon>Vertebrata</taxon>
        <taxon>Euteleostomi</taxon>
        <taxon>Mammalia</taxon>
        <taxon>Eutheria</taxon>
        <taxon>Euarchontoglires</taxon>
        <taxon>Glires</taxon>
        <taxon>Rodentia</taxon>
        <taxon>Myomorpha</taxon>
        <taxon>Muroidea</taxon>
        <taxon>Muridae</taxon>
        <taxon>Murinae</taxon>
        <taxon>Rattus</taxon>
    </lineage>
</organism>
<gene>
    <name type="primary">Adgrf5</name>
    <name type="synonym">Gpr116</name>
    <name type="synonym">Gprhep</name>
</gene>